<keyword id="KW-0010">Activator</keyword>
<keyword id="KW-0238">DNA-binding</keyword>
<keyword id="KW-1185">Reference proteome</keyword>
<keyword id="KW-0804">Transcription</keyword>
<keyword id="KW-0805">Transcription regulation</keyword>
<sequence length="98" mass="11169">MFEQRVNSDVLTVSTVNSQAQVTQKPLRDSVKQALKNYFAQLNGQDVSDLYELVLAEVEQPLLDMVMQYTRGNQTRAALMMGINRGTLRKKLKKYGMN</sequence>
<proteinExistence type="inferred from homology"/>
<evidence type="ECO:0000255" key="1">
    <source>
        <dbReference type="HAMAP-Rule" id="MF_00166"/>
    </source>
</evidence>
<name>FIS_PECAS</name>
<organism>
    <name type="scientific">Pectobacterium atrosepticum (strain SCRI 1043 / ATCC BAA-672)</name>
    <name type="common">Erwinia carotovora subsp. atroseptica</name>
    <dbReference type="NCBI Taxonomy" id="218491"/>
    <lineage>
        <taxon>Bacteria</taxon>
        <taxon>Pseudomonadati</taxon>
        <taxon>Pseudomonadota</taxon>
        <taxon>Gammaproteobacteria</taxon>
        <taxon>Enterobacterales</taxon>
        <taxon>Pectobacteriaceae</taxon>
        <taxon>Pectobacterium</taxon>
    </lineage>
</organism>
<protein>
    <recommendedName>
        <fullName evidence="1">DNA-binding protein Fis</fullName>
    </recommendedName>
</protein>
<dbReference type="EMBL" id="BX950851">
    <property type="protein sequence ID" value="CAG73175.1"/>
    <property type="molecule type" value="Genomic_DNA"/>
</dbReference>
<dbReference type="RefSeq" id="WP_005975342.1">
    <property type="nucleotide sequence ID" value="NC_004547.2"/>
</dbReference>
<dbReference type="SMR" id="Q6DAJ8"/>
<dbReference type="STRING" id="218491.ECA0255"/>
<dbReference type="GeneID" id="93388326"/>
<dbReference type="KEGG" id="eca:ECA0255"/>
<dbReference type="eggNOG" id="COG2901">
    <property type="taxonomic scope" value="Bacteria"/>
</dbReference>
<dbReference type="HOGENOM" id="CLU_158040_3_0_6"/>
<dbReference type="OrthoDB" id="9802388at2"/>
<dbReference type="Proteomes" id="UP000007966">
    <property type="component" value="Chromosome"/>
</dbReference>
<dbReference type="GO" id="GO:0003700">
    <property type="term" value="F:DNA-binding transcription factor activity"/>
    <property type="evidence" value="ECO:0007669"/>
    <property type="project" value="UniProtKB-UniRule"/>
</dbReference>
<dbReference type="GO" id="GO:0043565">
    <property type="term" value="F:sequence-specific DNA binding"/>
    <property type="evidence" value="ECO:0007669"/>
    <property type="project" value="InterPro"/>
</dbReference>
<dbReference type="FunFam" id="1.10.10.60:FF:000006">
    <property type="entry name" value="DNA-binding protein Fis"/>
    <property type="match status" value="1"/>
</dbReference>
<dbReference type="Gene3D" id="1.10.10.60">
    <property type="entry name" value="Homeodomain-like"/>
    <property type="match status" value="1"/>
</dbReference>
<dbReference type="HAMAP" id="MF_00166">
    <property type="entry name" value="DNA_binding_Fis"/>
    <property type="match status" value="1"/>
</dbReference>
<dbReference type="InterPro" id="IPR005412">
    <property type="entry name" value="Fis_DNA-bd"/>
</dbReference>
<dbReference type="InterPro" id="IPR009057">
    <property type="entry name" value="Homeodomain-like_sf"/>
</dbReference>
<dbReference type="InterPro" id="IPR002197">
    <property type="entry name" value="HTH_Fis"/>
</dbReference>
<dbReference type="InterPro" id="IPR050207">
    <property type="entry name" value="Trans_regulatory_Fis"/>
</dbReference>
<dbReference type="NCBIfam" id="NF001659">
    <property type="entry name" value="PRK00430.1"/>
    <property type="match status" value="1"/>
</dbReference>
<dbReference type="PANTHER" id="PTHR47918">
    <property type="entry name" value="DNA-BINDING PROTEIN FIS"/>
    <property type="match status" value="1"/>
</dbReference>
<dbReference type="PANTHER" id="PTHR47918:SF1">
    <property type="entry name" value="DNA-BINDING PROTEIN FIS"/>
    <property type="match status" value="1"/>
</dbReference>
<dbReference type="Pfam" id="PF02954">
    <property type="entry name" value="HTH_8"/>
    <property type="match status" value="1"/>
</dbReference>
<dbReference type="PIRSF" id="PIRSF002097">
    <property type="entry name" value="DNA-binding_Fis"/>
    <property type="match status" value="1"/>
</dbReference>
<dbReference type="PRINTS" id="PR01591">
    <property type="entry name" value="DNABINDNGFIS"/>
</dbReference>
<dbReference type="PRINTS" id="PR01590">
    <property type="entry name" value="HTHFIS"/>
</dbReference>
<dbReference type="SUPFAM" id="SSF46689">
    <property type="entry name" value="Homeodomain-like"/>
    <property type="match status" value="1"/>
</dbReference>
<comment type="function">
    <text evidence="1">Activates ribosomal RNA transcription. Plays a direct role in upstream activation of rRNA promoters.</text>
</comment>
<comment type="subunit">
    <text evidence="1">Homodimer.</text>
</comment>
<comment type="similarity">
    <text evidence="1">Belongs to the transcriptional regulatory Fis family.</text>
</comment>
<reference key="1">
    <citation type="journal article" date="2004" name="Proc. Natl. Acad. Sci. U.S.A.">
        <title>Genome sequence of the enterobacterial phytopathogen Erwinia carotovora subsp. atroseptica and characterization of virulence factors.</title>
        <authorList>
            <person name="Bell K.S."/>
            <person name="Sebaihia M."/>
            <person name="Pritchard L."/>
            <person name="Holden M.T.G."/>
            <person name="Hyman L.J."/>
            <person name="Holeva M.C."/>
            <person name="Thomson N.R."/>
            <person name="Bentley S.D."/>
            <person name="Churcher L.J.C."/>
            <person name="Mungall K."/>
            <person name="Atkin R."/>
            <person name="Bason N."/>
            <person name="Brooks K."/>
            <person name="Chillingworth T."/>
            <person name="Clark K."/>
            <person name="Doggett J."/>
            <person name="Fraser A."/>
            <person name="Hance Z."/>
            <person name="Hauser H."/>
            <person name="Jagels K."/>
            <person name="Moule S."/>
            <person name="Norbertczak H."/>
            <person name="Ormond D."/>
            <person name="Price C."/>
            <person name="Quail M.A."/>
            <person name="Sanders M."/>
            <person name="Walker D."/>
            <person name="Whitehead S."/>
            <person name="Salmond G.P.C."/>
            <person name="Birch P.R.J."/>
            <person name="Parkhill J."/>
            <person name="Toth I.K."/>
        </authorList>
    </citation>
    <scope>NUCLEOTIDE SEQUENCE [LARGE SCALE GENOMIC DNA]</scope>
    <source>
        <strain>SCRI 1043 / ATCC BAA-672</strain>
    </source>
</reference>
<feature type="chain" id="PRO_0000203882" description="DNA-binding protein Fis">
    <location>
        <begin position="1"/>
        <end position="98"/>
    </location>
</feature>
<feature type="DNA-binding region" description="H-T-H motif" evidence="1">
    <location>
        <begin position="74"/>
        <end position="93"/>
    </location>
</feature>
<accession>Q6DAJ8</accession>
<gene>
    <name evidence="1" type="primary">fis</name>
    <name type="ordered locus">ECA0255</name>
</gene>